<comment type="function">
    <text evidence="1">Bidirectionally degrades single-stranded DNA into large acid-insoluble oligonucleotides, which are then degraded further into small acid-soluble oligonucleotides.</text>
</comment>
<comment type="catalytic activity">
    <reaction evidence="1">
        <text>Exonucleolytic cleavage in either 5'- to 3'- or 3'- to 5'-direction to yield nucleoside 5'-phosphates.</text>
        <dbReference type="EC" id="3.1.11.6"/>
    </reaction>
</comment>
<comment type="subunit">
    <text evidence="1">Heterooligomer composed of large and small subunits.</text>
</comment>
<comment type="subcellular location">
    <subcellularLocation>
        <location evidence="1">Cytoplasm</location>
    </subcellularLocation>
</comment>
<comment type="similarity">
    <text evidence="1">Belongs to the XseB family.</text>
</comment>
<accession>B1XF10</accession>
<protein>
    <recommendedName>
        <fullName evidence="1">Exodeoxyribonuclease 7 small subunit</fullName>
        <ecNumber evidence="1">3.1.11.6</ecNumber>
    </recommendedName>
    <alternativeName>
        <fullName evidence="1">Exodeoxyribonuclease VII small subunit</fullName>
        <shortName evidence="1">Exonuclease VII small subunit</shortName>
    </alternativeName>
</protein>
<name>EX7S_ECODH</name>
<organism>
    <name type="scientific">Escherichia coli (strain K12 / DH10B)</name>
    <dbReference type="NCBI Taxonomy" id="316385"/>
    <lineage>
        <taxon>Bacteria</taxon>
        <taxon>Pseudomonadati</taxon>
        <taxon>Pseudomonadota</taxon>
        <taxon>Gammaproteobacteria</taxon>
        <taxon>Enterobacterales</taxon>
        <taxon>Enterobacteriaceae</taxon>
        <taxon>Escherichia</taxon>
    </lineage>
</organism>
<dbReference type="EC" id="3.1.11.6" evidence="1"/>
<dbReference type="EMBL" id="CP000948">
    <property type="protein sequence ID" value="ACB01550.1"/>
    <property type="molecule type" value="Genomic_DNA"/>
</dbReference>
<dbReference type="RefSeq" id="WP_001124935.1">
    <property type="nucleotide sequence ID" value="NC_010473.1"/>
</dbReference>
<dbReference type="SMR" id="B1XF10"/>
<dbReference type="GeneID" id="75202844"/>
<dbReference type="KEGG" id="ecd:ECDH10B_0378"/>
<dbReference type="HOGENOM" id="CLU_145918_3_3_6"/>
<dbReference type="GO" id="GO:0005829">
    <property type="term" value="C:cytosol"/>
    <property type="evidence" value="ECO:0007669"/>
    <property type="project" value="TreeGrafter"/>
</dbReference>
<dbReference type="GO" id="GO:0009318">
    <property type="term" value="C:exodeoxyribonuclease VII complex"/>
    <property type="evidence" value="ECO:0007669"/>
    <property type="project" value="InterPro"/>
</dbReference>
<dbReference type="GO" id="GO:0008855">
    <property type="term" value="F:exodeoxyribonuclease VII activity"/>
    <property type="evidence" value="ECO:0007669"/>
    <property type="project" value="UniProtKB-UniRule"/>
</dbReference>
<dbReference type="GO" id="GO:0006308">
    <property type="term" value="P:DNA catabolic process"/>
    <property type="evidence" value="ECO:0007669"/>
    <property type="project" value="UniProtKB-UniRule"/>
</dbReference>
<dbReference type="FunFam" id="1.10.287.1040:FF:000001">
    <property type="entry name" value="Exodeoxyribonuclease 7 small subunit"/>
    <property type="match status" value="1"/>
</dbReference>
<dbReference type="Gene3D" id="1.10.287.1040">
    <property type="entry name" value="Exonuclease VII, small subunit"/>
    <property type="match status" value="1"/>
</dbReference>
<dbReference type="HAMAP" id="MF_00337">
    <property type="entry name" value="Exonuc_7_S"/>
    <property type="match status" value="1"/>
</dbReference>
<dbReference type="InterPro" id="IPR003761">
    <property type="entry name" value="Exonuc_VII_S"/>
</dbReference>
<dbReference type="InterPro" id="IPR037004">
    <property type="entry name" value="Exonuc_VII_ssu_sf"/>
</dbReference>
<dbReference type="NCBIfam" id="NF002137">
    <property type="entry name" value="PRK00977.1-1"/>
    <property type="match status" value="1"/>
</dbReference>
<dbReference type="NCBIfam" id="NF002140">
    <property type="entry name" value="PRK00977.1-4"/>
    <property type="match status" value="1"/>
</dbReference>
<dbReference type="NCBIfam" id="TIGR01280">
    <property type="entry name" value="xseB"/>
    <property type="match status" value="1"/>
</dbReference>
<dbReference type="PANTHER" id="PTHR34137">
    <property type="entry name" value="EXODEOXYRIBONUCLEASE 7 SMALL SUBUNIT"/>
    <property type="match status" value="1"/>
</dbReference>
<dbReference type="PANTHER" id="PTHR34137:SF1">
    <property type="entry name" value="EXODEOXYRIBONUCLEASE 7 SMALL SUBUNIT"/>
    <property type="match status" value="1"/>
</dbReference>
<dbReference type="Pfam" id="PF02609">
    <property type="entry name" value="Exonuc_VII_S"/>
    <property type="match status" value="1"/>
</dbReference>
<dbReference type="PIRSF" id="PIRSF006488">
    <property type="entry name" value="Exonuc_VII_S"/>
    <property type="match status" value="1"/>
</dbReference>
<dbReference type="SUPFAM" id="SSF116842">
    <property type="entry name" value="XseB-like"/>
    <property type="match status" value="1"/>
</dbReference>
<evidence type="ECO:0000255" key="1">
    <source>
        <dbReference type="HAMAP-Rule" id="MF_00337"/>
    </source>
</evidence>
<feature type="chain" id="PRO_1000119923" description="Exodeoxyribonuclease 7 small subunit">
    <location>
        <begin position="1"/>
        <end position="80"/>
    </location>
</feature>
<gene>
    <name evidence="1" type="primary">xseB</name>
    <name type="ordered locus">ECDH10B_0378</name>
</gene>
<reference key="1">
    <citation type="journal article" date="2008" name="J. Bacteriol.">
        <title>The complete genome sequence of Escherichia coli DH10B: insights into the biology of a laboratory workhorse.</title>
        <authorList>
            <person name="Durfee T."/>
            <person name="Nelson R."/>
            <person name="Baldwin S."/>
            <person name="Plunkett G. III"/>
            <person name="Burland V."/>
            <person name="Mau B."/>
            <person name="Petrosino J.F."/>
            <person name="Qin X."/>
            <person name="Muzny D.M."/>
            <person name="Ayele M."/>
            <person name="Gibbs R.A."/>
            <person name="Csorgo B."/>
            <person name="Posfai G."/>
            <person name="Weinstock G.M."/>
            <person name="Blattner F.R."/>
        </authorList>
    </citation>
    <scope>NUCLEOTIDE SEQUENCE [LARGE SCALE GENOMIC DNA]</scope>
    <source>
        <strain>K12 / DH10B</strain>
    </source>
</reference>
<sequence>MPKKNEAPASFEKALSELEQIVTRLESGDLPLEEALNEFERGVQLARQGQAKLQQAEQRVQILLSDNEDASLTPFTPDNE</sequence>
<keyword id="KW-0963">Cytoplasm</keyword>
<keyword id="KW-0269">Exonuclease</keyword>
<keyword id="KW-0378">Hydrolase</keyword>
<keyword id="KW-0540">Nuclease</keyword>
<proteinExistence type="inferred from homology"/>